<reference key="1">
    <citation type="journal article" date="1995" name="Mol. Microbiol.">
        <title>Molecular analysis of the ams operon required for exopolysaccharide synthesis of Erwinia amylovora.</title>
        <authorList>
            <person name="Bugert P."/>
            <person name="Geider K."/>
        </authorList>
    </citation>
    <scope>NUCLEOTIDE SEQUENCE [GENOMIC DNA]</scope>
    <source>
        <strain>EA1/79</strain>
    </source>
</reference>
<evidence type="ECO:0000305" key="1"/>
<name>AMSB_ERWAM</name>
<protein>
    <recommendedName>
        <fullName>Amylovoran biosynthesis glycosyltransferase AmsB</fullName>
        <ecNumber>2.4.-.-</ecNumber>
    </recommendedName>
</protein>
<gene>
    <name type="primary">amsB</name>
</gene>
<comment type="function">
    <text>Involved in the biosynthesis of amylovoran, which functions as a virulence factor. May function as a glycosyl transferase which transfers galactose from UDP-galactose to a lipid-linked amylovoran-subunit precursor.</text>
</comment>
<comment type="pathway">
    <text>Glycan metabolism; exopolysaccharide biosynthesis.</text>
</comment>
<comment type="similarity">
    <text evidence="1">Belongs to the glycosyltransferase 2 family.</text>
</comment>
<feature type="chain" id="PRO_0000059179" description="Amylovoran biosynthesis glycosyltransferase AmsB">
    <location>
        <begin position="1"/>
        <end position="301"/>
    </location>
</feature>
<proteinExistence type="inferred from homology"/>
<dbReference type="EC" id="2.4.-.-"/>
<dbReference type="EMBL" id="X77921">
    <property type="protein sequence ID" value="CAA54883.1"/>
    <property type="molecule type" value="Genomic_DNA"/>
</dbReference>
<dbReference type="PIR" id="S61895">
    <property type="entry name" value="S52142"/>
</dbReference>
<dbReference type="RefSeq" id="WP_004158325.1">
    <property type="nucleotide sequence ID" value="NZ_RQKG01000006.1"/>
</dbReference>
<dbReference type="SMR" id="Q46632"/>
<dbReference type="CAZy" id="GT2">
    <property type="family name" value="Glycosyltransferase Family 2"/>
</dbReference>
<dbReference type="OMA" id="DYDFCIR"/>
<dbReference type="UniPathway" id="UPA00631"/>
<dbReference type="GO" id="GO:0016757">
    <property type="term" value="F:glycosyltransferase activity"/>
    <property type="evidence" value="ECO:0007669"/>
    <property type="project" value="UniProtKB-KW"/>
</dbReference>
<dbReference type="GO" id="GO:0000271">
    <property type="term" value="P:polysaccharide biosynthetic process"/>
    <property type="evidence" value="ECO:0007669"/>
    <property type="project" value="UniProtKB-KW"/>
</dbReference>
<dbReference type="CDD" id="cd00761">
    <property type="entry name" value="Glyco_tranf_GTA_type"/>
    <property type="match status" value="1"/>
</dbReference>
<dbReference type="Gene3D" id="3.90.550.10">
    <property type="entry name" value="Spore Coat Polysaccharide Biosynthesis Protein SpsA, Chain A"/>
    <property type="match status" value="1"/>
</dbReference>
<dbReference type="InterPro" id="IPR001173">
    <property type="entry name" value="Glyco_trans_2-like"/>
</dbReference>
<dbReference type="InterPro" id="IPR050834">
    <property type="entry name" value="Glycosyltransf_2"/>
</dbReference>
<dbReference type="InterPro" id="IPR029044">
    <property type="entry name" value="Nucleotide-diphossugar_trans"/>
</dbReference>
<dbReference type="PANTHER" id="PTHR43685">
    <property type="entry name" value="GLYCOSYLTRANSFERASE"/>
    <property type="match status" value="1"/>
</dbReference>
<dbReference type="PANTHER" id="PTHR43685:SF2">
    <property type="entry name" value="GLYCOSYLTRANSFERASE 2-LIKE DOMAIN-CONTAINING PROTEIN"/>
    <property type="match status" value="1"/>
</dbReference>
<dbReference type="Pfam" id="PF00535">
    <property type="entry name" value="Glycos_transf_2"/>
    <property type="match status" value="1"/>
</dbReference>
<dbReference type="SUPFAM" id="SSF53448">
    <property type="entry name" value="Nucleotide-diphospho-sugar transferases"/>
    <property type="match status" value="1"/>
</dbReference>
<keyword id="KW-0270">Exopolysaccharide synthesis</keyword>
<keyword id="KW-0328">Glycosyltransferase</keyword>
<keyword id="KW-0808">Transferase</keyword>
<keyword id="KW-0843">Virulence</keyword>
<organism>
    <name type="scientific">Erwinia amylovora</name>
    <name type="common">Fire blight bacteria</name>
    <dbReference type="NCBI Taxonomy" id="552"/>
    <lineage>
        <taxon>Bacteria</taxon>
        <taxon>Pseudomonadati</taxon>
        <taxon>Pseudomonadota</taxon>
        <taxon>Gammaproteobacteria</taxon>
        <taxon>Enterobacterales</taxon>
        <taxon>Erwiniaceae</taxon>
        <taxon>Erwinia</taxon>
    </lineage>
</organism>
<sequence length="301" mass="34788">MKDISFSVVIPAYNASESIITTLDCLNEQSYKNFDVIIVDDKSADAQKLAEVVSSERYSGLKINLVLSETKLNGAGARNRGIDLATGDYVCFLDADDEWHKDKLQQNLSLIERLEGQGDRRFIIYSQVNIIQDGSFLKVMPLKPVGEHESIAEYLFGCYGFIQTSTIVLKREDAAEIRFDERYIRHQDYDLCIRADKLGFKFVMIAQPLANYHMVTRFGSQHKGESVKYSLFWLDAMKPHLTRRDVYTYKAYKLPLRYKMDGKSLQASLSFARYFFLTNKDNRNDFLKRLMNKLRTRLTGK</sequence>
<accession>Q46632</accession>